<gene>
    <name evidence="1" type="primary">rplP</name>
    <name type="ordered locus">RER_18590</name>
</gene>
<proteinExistence type="inferred from homology"/>
<comment type="function">
    <text evidence="1">Binds 23S rRNA and is also seen to make contacts with the A and possibly P site tRNAs.</text>
</comment>
<comment type="subunit">
    <text evidence="1">Part of the 50S ribosomal subunit.</text>
</comment>
<comment type="similarity">
    <text evidence="1">Belongs to the universal ribosomal protein uL16 family.</text>
</comment>
<dbReference type="EMBL" id="AP008957">
    <property type="protein sequence ID" value="BAH32567.1"/>
    <property type="molecule type" value="Genomic_DNA"/>
</dbReference>
<dbReference type="RefSeq" id="WP_003940899.1">
    <property type="nucleotide sequence ID" value="NC_012490.1"/>
</dbReference>
<dbReference type="SMR" id="C0ZW32"/>
<dbReference type="GeneID" id="93803297"/>
<dbReference type="KEGG" id="rer:RER_18590"/>
<dbReference type="eggNOG" id="COG0197">
    <property type="taxonomic scope" value="Bacteria"/>
</dbReference>
<dbReference type="HOGENOM" id="CLU_078858_2_1_11"/>
<dbReference type="Proteomes" id="UP000002204">
    <property type="component" value="Chromosome"/>
</dbReference>
<dbReference type="GO" id="GO:0022625">
    <property type="term" value="C:cytosolic large ribosomal subunit"/>
    <property type="evidence" value="ECO:0007669"/>
    <property type="project" value="TreeGrafter"/>
</dbReference>
<dbReference type="GO" id="GO:0019843">
    <property type="term" value="F:rRNA binding"/>
    <property type="evidence" value="ECO:0007669"/>
    <property type="project" value="UniProtKB-UniRule"/>
</dbReference>
<dbReference type="GO" id="GO:0003735">
    <property type="term" value="F:structural constituent of ribosome"/>
    <property type="evidence" value="ECO:0007669"/>
    <property type="project" value="InterPro"/>
</dbReference>
<dbReference type="GO" id="GO:0000049">
    <property type="term" value="F:tRNA binding"/>
    <property type="evidence" value="ECO:0007669"/>
    <property type="project" value="UniProtKB-KW"/>
</dbReference>
<dbReference type="GO" id="GO:0006412">
    <property type="term" value="P:translation"/>
    <property type="evidence" value="ECO:0007669"/>
    <property type="project" value="UniProtKB-UniRule"/>
</dbReference>
<dbReference type="CDD" id="cd01433">
    <property type="entry name" value="Ribosomal_L16_L10e"/>
    <property type="match status" value="1"/>
</dbReference>
<dbReference type="FunFam" id="3.90.1170.10:FF:000001">
    <property type="entry name" value="50S ribosomal protein L16"/>
    <property type="match status" value="1"/>
</dbReference>
<dbReference type="Gene3D" id="3.90.1170.10">
    <property type="entry name" value="Ribosomal protein L10e/L16"/>
    <property type="match status" value="1"/>
</dbReference>
<dbReference type="HAMAP" id="MF_01342">
    <property type="entry name" value="Ribosomal_uL16"/>
    <property type="match status" value="1"/>
</dbReference>
<dbReference type="InterPro" id="IPR047873">
    <property type="entry name" value="Ribosomal_uL16"/>
</dbReference>
<dbReference type="InterPro" id="IPR000114">
    <property type="entry name" value="Ribosomal_uL16_bact-type"/>
</dbReference>
<dbReference type="InterPro" id="IPR020798">
    <property type="entry name" value="Ribosomal_uL16_CS"/>
</dbReference>
<dbReference type="InterPro" id="IPR016180">
    <property type="entry name" value="Ribosomal_uL16_dom"/>
</dbReference>
<dbReference type="InterPro" id="IPR036920">
    <property type="entry name" value="Ribosomal_uL16_sf"/>
</dbReference>
<dbReference type="NCBIfam" id="TIGR01164">
    <property type="entry name" value="rplP_bact"/>
    <property type="match status" value="1"/>
</dbReference>
<dbReference type="PANTHER" id="PTHR12220">
    <property type="entry name" value="50S/60S RIBOSOMAL PROTEIN L16"/>
    <property type="match status" value="1"/>
</dbReference>
<dbReference type="PANTHER" id="PTHR12220:SF13">
    <property type="entry name" value="LARGE RIBOSOMAL SUBUNIT PROTEIN UL16M"/>
    <property type="match status" value="1"/>
</dbReference>
<dbReference type="Pfam" id="PF00252">
    <property type="entry name" value="Ribosomal_L16"/>
    <property type="match status" value="1"/>
</dbReference>
<dbReference type="PRINTS" id="PR00060">
    <property type="entry name" value="RIBOSOMALL16"/>
</dbReference>
<dbReference type="SUPFAM" id="SSF54686">
    <property type="entry name" value="Ribosomal protein L16p/L10e"/>
    <property type="match status" value="1"/>
</dbReference>
<dbReference type="PROSITE" id="PS00586">
    <property type="entry name" value="RIBOSOMAL_L16_1"/>
    <property type="match status" value="1"/>
</dbReference>
<dbReference type="PROSITE" id="PS00701">
    <property type="entry name" value="RIBOSOMAL_L16_2"/>
    <property type="match status" value="1"/>
</dbReference>
<name>RL16_RHOE4</name>
<protein>
    <recommendedName>
        <fullName evidence="1">Large ribosomal subunit protein uL16</fullName>
    </recommendedName>
    <alternativeName>
        <fullName evidence="3">50S ribosomal protein L16</fullName>
    </alternativeName>
</protein>
<sequence length="138" mass="15888">MLIPRRVKHRKQHHPSRSGAAKGGTQVTFGDYGIQALEPAYITNRQIESARIAMTRHIKRGGKIWINIFPDRPLTKKPAETRMGSGKGSPEWWIANVKPGRVLFEMTYPNEEIAREALRRAMHKLPCKCRIVTREEQF</sequence>
<feature type="chain" id="PRO_1000214742" description="Large ribosomal subunit protein uL16">
    <location>
        <begin position="1"/>
        <end position="138"/>
    </location>
</feature>
<feature type="region of interest" description="Disordered" evidence="2">
    <location>
        <begin position="1"/>
        <end position="25"/>
    </location>
</feature>
<feature type="compositionally biased region" description="Basic residues" evidence="2">
    <location>
        <begin position="1"/>
        <end position="16"/>
    </location>
</feature>
<accession>C0ZW32</accession>
<reference key="1">
    <citation type="submission" date="2005-03" db="EMBL/GenBank/DDBJ databases">
        <title>Comparison of the complete genome sequences of Rhodococcus erythropolis PR4 and Rhodococcus opacus B4.</title>
        <authorList>
            <person name="Takarada H."/>
            <person name="Sekine M."/>
            <person name="Hosoyama A."/>
            <person name="Yamada R."/>
            <person name="Fujisawa T."/>
            <person name="Omata S."/>
            <person name="Shimizu A."/>
            <person name="Tsukatani N."/>
            <person name="Tanikawa S."/>
            <person name="Fujita N."/>
            <person name="Harayama S."/>
        </authorList>
    </citation>
    <scope>NUCLEOTIDE SEQUENCE [LARGE SCALE GENOMIC DNA]</scope>
    <source>
        <strain>PR4 / NBRC 100887</strain>
    </source>
</reference>
<keyword id="KW-0687">Ribonucleoprotein</keyword>
<keyword id="KW-0689">Ribosomal protein</keyword>
<keyword id="KW-0694">RNA-binding</keyword>
<keyword id="KW-0699">rRNA-binding</keyword>
<keyword id="KW-0820">tRNA-binding</keyword>
<evidence type="ECO:0000255" key="1">
    <source>
        <dbReference type="HAMAP-Rule" id="MF_01342"/>
    </source>
</evidence>
<evidence type="ECO:0000256" key="2">
    <source>
        <dbReference type="SAM" id="MobiDB-lite"/>
    </source>
</evidence>
<evidence type="ECO:0000305" key="3"/>
<organism>
    <name type="scientific">Rhodococcus erythropolis (strain PR4 / NBRC 100887)</name>
    <dbReference type="NCBI Taxonomy" id="234621"/>
    <lineage>
        <taxon>Bacteria</taxon>
        <taxon>Bacillati</taxon>
        <taxon>Actinomycetota</taxon>
        <taxon>Actinomycetes</taxon>
        <taxon>Mycobacteriales</taxon>
        <taxon>Nocardiaceae</taxon>
        <taxon>Rhodococcus</taxon>
        <taxon>Rhodococcus erythropolis group</taxon>
    </lineage>
</organism>